<keyword id="KW-0004">4Fe-4S</keyword>
<keyword id="KW-0408">Iron</keyword>
<keyword id="KW-0411">Iron-sulfur</keyword>
<keyword id="KW-0479">Metal-binding</keyword>
<keyword id="KW-0489">Methyltransferase</keyword>
<keyword id="KW-1185">Reference proteome</keyword>
<keyword id="KW-0698">rRNA processing</keyword>
<keyword id="KW-0949">S-adenosyl-L-methionine</keyword>
<keyword id="KW-0808">Transferase</keyword>
<sequence>MIDCRYYQQNECRSCQWLEIPCSQQLTEKQYHLKQQLISINYDEAQWVAPFQSNQQGFRNKAKMVVSGSVERPILGILKNPNDPQSAIDLCDCPLYPTHFSAIFSILKDFIGRAGLVPYNIAKQKGELKYILLTESIATEKLMLRFVLRTENKLPLIRRELPKLLEKLPHLEVISINLQPQHAAILEGEQEIFLTEQQFLPENFNGIPLFIRPRGFFQTNPKVAAGLYATAQQWVAEFPIYNLWDLFCGVGGFGLHCAKALQEKWGKPIKLTGIEISSSAILAASHSAKILGLEHVNFQSLDAASVIENKNENKPDLVIVNPPRRGIGKELSEFLNQIQPHFILYSSCNAMTMGKDLQHLTCYKPLKIQLFDMFPQTSHYEVLVLLERKKIN</sequence>
<organism>
    <name type="scientific">Haemophilus influenzae (strain ATCC 51907 / DSM 11121 / KW20 / Rd)</name>
    <dbReference type="NCBI Taxonomy" id="71421"/>
    <lineage>
        <taxon>Bacteria</taxon>
        <taxon>Pseudomonadati</taxon>
        <taxon>Pseudomonadota</taxon>
        <taxon>Gammaproteobacteria</taxon>
        <taxon>Pasteurellales</taxon>
        <taxon>Pasteurellaceae</taxon>
        <taxon>Haemophilus</taxon>
    </lineage>
</organism>
<protein>
    <recommendedName>
        <fullName evidence="1">23S rRNA (uracil(747)-C(5))-methyltransferase RlmC</fullName>
        <ecNumber evidence="1">2.1.1.189</ecNumber>
    </recommendedName>
    <alternativeName>
        <fullName evidence="1">23S rRNA(m5U747)-methyltransferase</fullName>
    </alternativeName>
</protein>
<feature type="chain" id="PRO_0000161930" description="23S rRNA (uracil(747)-C(5))-methyltransferase RlmC">
    <location>
        <begin position="1"/>
        <end position="392"/>
    </location>
</feature>
<feature type="active site" description="Nucleophile" evidence="1">
    <location>
        <position position="348"/>
    </location>
</feature>
<feature type="binding site" evidence="1">
    <location>
        <position position="4"/>
    </location>
    <ligand>
        <name>[4Fe-4S] cluster</name>
        <dbReference type="ChEBI" id="CHEBI:49883"/>
    </ligand>
</feature>
<feature type="binding site" evidence="1">
    <location>
        <position position="12"/>
    </location>
    <ligand>
        <name>[4Fe-4S] cluster</name>
        <dbReference type="ChEBI" id="CHEBI:49883"/>
    </ligand>
</feature>
<feature type="binding site" evidence="1">
    <location>
        <position position="15"/>
    </location>
    <ligand>
        <name>[4Fe-4S] cluster</name>
        <dbReference type="ChEBI" id="CHEBI:49883"/>
    </ligand>
</feature>
<feature type="binding site" evidence="1">
    <location>
        <position position="93"/>
    </location>
    <ligand>
        <name>[4Fe-4S] cluster</name>
        <dbReference type="ChEBI" id="CHEBI:49883"/>
    </ligand>
</feature>
<feature type="binding site" evidence="1">
    <location>
        <position position="218"/>
    </location>
    <ligand>
        <name>S-adenosyl-L-methionine</name>
        <dbReference type="ChEBI" id="CHEBI:59789"/>
    </ligand>
</feature>
<feature type="binding site" evidence="1">
    <location>
        <position position="247"/>
    </location>
    <ligand>
        <name>S-adenosyl-L-methionine</name>
        <dbReference type="ChEBI" id="CHEBI:59789"/>
    </ligand>
</feature>
<feature type="binding site" evidence="1">
    <location>
        <position position="275"/>
    </location>
    <ligand>
        <name>S-adenosyl-L-methionine</name>
        <dbReference type="ChEBI" id="CHEBI:59789"/>
    </ligand>
</feature>
<feature type="binding site" evidence="1">
    <location>
        <position position="321"/>
    </location>
    <ligand>
        <name>S-adenosyl-L-methionine</name>
        <dbReference type="ChEBI" id="CHEBI:59789"/>
    </ligand>
</feature>
<comment type="function">
    <text evidence="1">Catalyzes the formation of 5-methyl-uridine at position 747 (m5U747) in 23S rRNA.</text>
</comment>
<comment type="catalytic activity">
    <reaction evidence="1">
        <text>uridine(747) in 23S rRNA + S-adenosyl-L-methionine = 5-methyluridine(747) in 23S rRNA + S-adenosyl-L-homocysteine + H(+)</text>
        <dbReference type="Rhea" id="RHEA:42628"/>
        <dbReference type="Rhea" id="RHEA-COMP:10154"/>
        <dbReference type="Rhea" id="RHEA-COMP:10155"/>
        <dbReference type="ChEBI" id="CHEBI:15378"/>
        <dbReference type="ChEBI" id="CHEBI:57856"/>
        <dbReference type="ChEBI" id="CHEBI:59789"/>
        <dbReference type="ChEBI" id="CHEBI:65315"/>
        <dbReference type="ChEBI" id="CHEBI:74447"/>
        <dbReference type="EC" id="2.1.1.189"/>
    </reaction>
</comment>
<comment type="similarity">
    <text evidence="1">Belongs to the class I-like SAM-binding methyltransferase superfamily. RNA M5U methyltransferase family. RlmC subfamily.</text>
</comment>
<gene>
    <name evidence="1" type="primary">rlmC</name>
    <name type="synonym">rumB</name>
    <name type="ordered locus">HI_0958</name>
</gene>
<evidence type="ECO:0000255" key="1">
    <source>
        <dbReference type="HAMAP-Rule" id="MF_01012"/>
    </source>
</evidence>
<accession>P44083</accession>
<proteinExistence type="inferred from homology"/>
<dbReference type="EC" id="2.1.1.189" evidence="1"/>
<dbReference type="EMBL" id="L42023">
    <property type="protein sequence ID" value="AAC22619.1"/>
    <property type="molecule type" value="Genomic_DNA"/>
</dbReference>
<dbReference type="PIR" id="B64017">
    <property type="entry name" value="B64017"/>
</dbReference>
<dbReference type="RefSeq" id="NP_439119.1">
    <property type="nucleotide sequence ID" value="NC_000907.1"/>
</dbReference>
<dbReference type="SMR" id="P44083"/>
<dbReference type="STRING" id="71421.HI_0958"/>
<dbReference type="EnsemblBacteria" id="AAC22619">
    <property type="protein sequence ID" value="AAC22619"/>
    <property type="gene ID" value="HI_0958"/>
</dbReference>
<dbReference type="KEGG" id="hin:HI_0958"/>
<dbReference type="PATRIC" id="fig|71421.8.peg.1000"/>
<dbReference type="eggNOG" id="COG2265">
    <property type="taxonomic scope" value="Bacteria"/>
</dbReference>
<dbReference type="HOGENOM" id="CLU_014689_0_0_6"/>
<dbReference type="OrthoDB" id="9804590at2"/>
<dbReference type="PhylomeDB" id="P44083"/>
<dbReference type="BioCyc" id="HINF71421:G1GJ1-999-MONOMER"/>
<dbReference type="Proteomes" id="UP000000579">
    <property type="component" value="Chromosome"/>
</dbReference>
<dbReference type="GO" id="GO:0051539">
    <property type="term" value="F:4 iron, 4 sulfur cluster binding"/>
    <property type="evidence" value="ECO:0007669"/>
    <property type="project" value="UniProtKB-KW"/>
</dbReference>
<dbReference type="GO" id="GO:0005506">
    <property type="term" value="F:iron ion binding"/>
    <property type="evidence" value="ECO:0007669"/>
    <property type="project" value="UniProtKB-UniRule"/>
</dbReference>
<dbReference type="GO" id="GO:0070041">
    <property type="term" value="F:rRNA (uridine-C5-)-methyltransferase activity"/>
    <property type="evidence" value="ECO:0000318"/>
    <property type="project" value="GO_Central"/>
</dbReference>
<dbReference type="GO" id="GO:0070475">
    <property type="term" value="P:rRNA base methylation"/>
    <property type="evidence" value="ECO:0000318"/>
    <property type="project" value="GO_Central"/>
</dbReference>
<dbReference type="CDD" id="cd02440">
    <property type="entry name" value="AdoMet_MTases"/>
    <property type="match status" value="1"/>
</dbReference>
<dbReference type="FunFam" id="2.40.50.1070:FF:000002">
    <property type="entry name" value="23S rRNA (uracil(747)-C(5))-methyltransferase RlmC"/>
    <property type="match status" value="1"/>
</dbReference>
<dbReference type="Gene3D" id="2.40.50.1070">
    <property type="match status" value="1"/>
</dbReference>
<dbReference type="Gene3D" id="3.40.50.150">
    <property type="entry name" value="Vaccinia Virus protein VP39"/>
    <property type="match status" value="1"/>
</dbReference>
<dbReference type="HAMAP" id="MF_01012">
    <property type="entry name" value="23SrRNA_methyltr_RlmC"/>
    <property type="match status" value="1"/>
</dbReference>
<dbReference type="InterPro" id="IPR011825">
    <property type="entry name" value="23SrRNA_MeTrfase_RlmC"/>
</dbReference>
<dbReference type="InterPro" id="IPR030390">
    <property type="entry name" value="MeTrfase_TrmA_AS"/>
</dbReference>
<dbReference type="InterPro" id="IPR030391">
    <property type="entry name" value="MeTrfase_TrmA_CS"/>
</dbReference>
<dbReference type="InterPro" id="IPR029063">
    <property type="entry name" value="SAM-dependent_MTases_sf"/>
</dbReference>
<dbReference type="InterPro" id="IPR010280">
    <property type="entry name" value="U5_MeTrfase_fam"/>
</dbReference>
<dbReference type="NCBIfam" id="TIGR02085">
    <property type="entry name" value="meth_trns_rumB"/>
    <property type="match status" value="1"/>
</dbReference>
<dbReference type="PANTHER" id="PTHR11061">
    <property type="entry name" value="RNA M5U METHYLTRANSFERASE"/>
    <property type="match status" value="1"/>
</dbReference>
<dbReference type="PANTHER" id="PTHR11061:SF30">
    <property type="entry name" value="TRNA (URACIL(54)-C(5))-METHYLTRANSFERASE"/>
    <property type="match status" value="1"/>
</dbReference>
<dbReference type="Pfam" id="PF05958">
    <property type="entry name" value="tRNA_U5-meth_tr"/>
    <property type="match status" value="1"/>
</dbReference>
<dbReference type="SUPFAM" id="SSF53335">
    <property type="entry name" value="S-adenosyl-L-methionine-dependent methyltransferases"/>
    <property type="match status" value="1"/>
</dbReference>
<dbReference type="PROSITE" id="PS51687">
    <property type="entry name" value="SAM_MT_RNA_M5U"/>
    <property type="match status" value="1"/>
</dbReference>
<dbReference type="PROSITE" id="PS01230">
    <property type="entry name" value="TRMA_1"/>
    <property type="match status" value="1"/>
</dbReference>
<dbReference type="PROSITE" id="PS01231">
    <property type="entry name" value="TRMA_2"/>
    <property type="match status" value="1"/>
</dbReference>
<reference key="1">
    <citation type="journal article" date="1995" name="Science">
        <title>Whole-genome random sequencing and assembly of Haemophilus influenzae Rd.</title>
        <authorList>
            <person name="Fleischmann R.D."/>
            <person name="Adams M.D."/>
            <person name="White O."/>
            <person name="Clayton R.A."/>
            <person name="Kirkness E.F."/>
            <person name="Kerlavage A.R."/>
            <person name="Bult C.J."/>
            <person name="Tomb J.-F."/>
            <person name="Dougherty B.A."/>
            <person name="Merrick J.M."/>
            <person name="McKenney K."/>
            <person name="Sutton G.G."/>
            <person name="FitzHugh W."/>
            <person name="Fields C.A."/>
            <person name="Gocayne J.D."/>
            <person name="Scott J.D."/>
            <person name="Shirley R."/>
            <person name="Liu L.-I."/>
            <person name="Glodek A."/>
            <person name="Kelley J.M."/>
            <person name="Weidman J.F."/>
            <person name="Phillips C.A."/>
            <person name="Spriggs T."/>
            <person name="Hedblom E."/>
            <person name="Cotton M.D."/>
            <person name="Utterback T.R."/>
            <person name="Hanna M.C."/>
            <person name="Nguyen D.T."/>
            <person name="Saudek D.M."/>
            <person name="Brandon R.C."/>
            <person name="Fine L.D."/>
            <person name="Fritchman J.L."/>
            <person name="Fuhrmann J.L."/>
            <person name="Geoghagen N.S.M."/>
            <person name="Gnehm C.L."/>
            <person name="McDonald L.A."/>
            <person name="Small K.V."/>
            <person name="Fraser C.M."/>
            <person name="Smith H.O."/>
            <person name="Venter J.C."/>
        </authorList>
    </citation>
    <scope>NUCLEOTIDE SEQUENCE [LARGE SCALE GENOMIC DNA]</scope>
    <source>
        <strain>ATCC 51907 / DSM 11121 / KW20 / Rd</strain>
    </source>
</reference>
<name>RLMC_HAEIN</name>